<evidence type="ECO:0000255" key="1">
    <source>
        <dbReference type="HAMAP-Rule" id="MF_00561"/>
    </source>
</evidence>
<proteinExistence type="inferred from homology"/>
<reference key="1">
    <citation type="journal article" date="2002" name="Genome Res.">
        <title>The genome of Methanosarcina acetivorans reveals extensive metabolic and physiological diversity.</title>
        <authorList>
            <person name="Galagan J.E."/>
            <person name="Nusbaum C."/>
            <person name="Roy A."/>
            <person name="Endrizzi M.G."/>
            <person name="Macdonald P."/>
            <person name="FitzHugh W."/>
            <person name="Calvo S."/>
            <person name="Engels R."/>
            <person name="Smirnov S."/>
            <person name="Atnoor D."/>
            <person name="Brown A."/>
            <person name="Allen N."/>
            <person name="Naylor J."/>
            <person name="Stange-Thomann N."/>
            <person name="DeArellano K."/>
            <person name="Johnson R."/>
            <person name="Linton L."/>
            <person name="McEwan P."/>
            <person name="McKernan K."/>
            <person name="Talamas J."/>
            <person name="Tirrell A."/>
            <person name="Ye W."/>
            <person name="Zimmer A."/>
            <person name="Barber R.D."/>
            <person name="Cann I."/>
            <person name="Graham D.E."/>
            <person name="Grahame D.A."/>
            <person name="Guss A.M."/>
            <person name="Hedderich R."/>
            <person name="Ingram-Smith C."/>
            <person name="Kuettner H.C."/>
            <person name="Krzycki J.A."/>
            <person name="Leigh J.A."/>
            <person name="Li W."/>
            <person name="Liu J."/>
            <person name="Mukhopadhyay B."/>
            <person name="Reeve J.N."/>
            <person name="Smith K."/>
            <person name="Springer T.A."/>
            <person name="Umayam L.A."/>
            <person name="White O."/>
            <person name="White R.H."/>
            <person name="de Macario E.C."/>
            <person name="Ferry J.G."/>
            <person name="Jarrell K.F."/>
            <person name="Jing H."/>
            <person name="Macario A.J.L."/>
            <person name="Paulsen I.T."/>
            <person name="Pritchett M."/>
            <person name="Sowers K.R."/>
            <person name="Swanson R.V."/>
            <person name="Zinder S.H."/>
            <person name="Lander E."/>
            <person name="Metcalf W.W."/>
            <person name="Birren B."/>
        </authorList>
    </citation>
    <scope>NUCLEOTIDE SEQUENCE [LARGE SCALE GENOMIC DNA]</scope>
    <source>
        <strain>ATCC 35395 / DSM 2834 / JCM 12185 / C2A</strain>
    </source>
</reference>
<feature type="chain" id="PRO_0000184763" description="ADP-specific phosphofructokinase">
    <location>
        <begin position="1"/>
        <end position="491"/>
    </location>
</feature>
<feature type="domain" description="ADPK" evidence="1">
    <location>
        <begin position="4"/>
        <end position="486"/>
    </location>
</feature>
<feature type="active site" description="Proton acceptor" evidence="1">
    <location>
        <position position="470"/>
    </location>
</feature>
<feature type="binding site" evidence="1">
    <location>
        <position position="281"/>
    </location>
    <ligand>
        <name>Mg(2+)</name>
        <dbReference type="ChEBI" id="CHEBI:18420"/>
    </ligand>
</feature>
<feature type="binding site" evidence="1">
    <location>
        <position position="312"/>
    </location>
    <ligand>
        <name>Mg(2+)</name>
        <dbReference type="ChEBI" id="CHEBI:18420"/>
    </ligand>
</feature>
<feature type="binding site" evidence="1">
    <location>
        <position position="470"/>
    </location>
    <ligand>
        <name>Mg(2+)</name>
        <dbReference type="ChEBI" id="CHEBI:18420"/>
    </ligand>
</feature>
<comment type="function">
    <text evidence="1">Catalyzes the phosphorylation of fructose 6-phosphate to fructose 1,6-bisphosphate using ADP as the phosphate donor.</text>
</comment>
<comment type="catalytic activity">
    <reaction evidence="1">
        <text>beta-D-fructose 6-phosphate + ADP = beta-D-fructose 1,6-bisphosphate + AMP + H(+)</text>
        <dbReference type="Rhea" id="RHEA:20105"/>
        <dbReference type="ChEBI" id="CHEBI:15378"/>
        <dbReference type="ChEBI" id="CHEBI:32966"/>
        <dbReference type="ChEBI" id="CHEBI:57634"/>
        <dbReference type="ChEBI" id="CHEBI:456215"/>
        <dbReference type="ChEBI" id="CHEBI:456216"/>
        <dbReference type="EC" id="2.7.1.146"/>
    </reaction>
</comment>
<comment type="cofactor">
    <cofactor evidence="1">
        <name>Mg(2+)</name>
        <dbReference type="ChEBI" id="CHEBI:18420"/>
    </cofactor>
    <text evidence="1">Binds 1 Mg(2+) ion per subunit.</text>
</comment>
<comment type="pathway">
    <text evidence="1">Carbohydrate degradation; glycolysis.</text>
</comment>
<comment type="subcellular location">
    <subcellularLocation>
        <location evidence="1">Cytoplasm</location>
    </subcellularLocation>
</comment>
<comment type="similarity">
    <text evidence="1">Belongs to the carbohydrate kinase PfkC family.</text>
</comment>
<name>K6PF_METAC</name>
<keyword id="KW-0963">Cytoplasm</keyword>
<keyword id="KW-0324">Glycolysis</keyword>
<keyword id="KW-0418">Kinase</keyword>
<keyword id="KW-0460">Magnesium</keyword>
<keyword id="KW-0479">Metal-binding</keyword>
<keyword id="KW-1185">Reference proteome</keyword>
<keyword id="KW-0808">Transferase</keyword>
<dbReference type="EC" id="2.7.1.146" evidence="1"/>
<dbReference type="EMBL" id="AE010299">
    <property type="protein sequence ID" value="AAM06924.1"/>
    <property type="molecule type" value="Genomic_DNA"/>
</dbReference>
<dbReference type="RefSeq" id="WP_011023477.1">
    <property type="nucleotide sequence ID" value="NC_003552.1"/>
</dbReference>
<dbReference type="SMR" id="P58847"/>
<dbReference type="FunCoup" id="P58847">
    <property type="interactions" value="129"/>
</dbReference>
<dbReference type="STRING" id="188937.MA_3563"/>
<dbReference type="EnsemblBacteria" id="AAM06924">
    <property type="protein sequence ID" value="AAM06924"/>
    <property type="gene ID" value="MA_3563"/>
</dbReference>
<dbReference type="GeneID" id="1475456"/>
<dbReference type="KEGG" id="mac:MA_3563"/>
<dbReference type="HOGENOM" id="CLU_046643_0_0_2"/>
<dbReference type="InParanoid" id="P58847"/>
<dbReference type="OrthoDB" id="85200at2157"/>
<dbReference type="PhylomeDB" id="P58847"/>
<dbReference type="UniPathway" id="UPA00109"/>
<dbReference type="Proteomes" id="UP000002487">
    <property type="component" value="Chromosome"/>
</dbReference>
<dbReference type="GO" id="GO:0005737">
    <property type="term" value="C:cytoplasm"/>
    <property type="evidence" value="ECO:0007669"/>
    <property type="project" value="UniProtKB-SubCell"/>
</dbReference>
<dbReference type="GO" id="GO:0043844">
    <property type="term" value="F:ADP-specific phosphofructokinase activity"/>
    <property type="evidence" value="ECO:0007669"/>
    <property type="project" value="UniProtKB-EC"/>
</dbReference>
<dbReference type="GO" id="GO:0000287">
    <property type="term" value="F:magnesium ion binding"/>
    <property type="evidence" value="ECO:0007669"/>
    <property type="project" value="InterPro"/>
</dbReference>
<dbReference type="GO" id="GO:0008443">
    <property type="term" value="F:phosphofructokinase activity"/>
    <property type="evidence" value="ECO:0007669"/>
    <property type="project" value="InterPro"/>
</dbReference>
<dbReference type="GO" id="GO:0005975">
    <property type="term" value="P:carbohydrate metabolic process"/>
    <property type="evidence" value="ECO:0000318"/>
    <property type="project" value="GO_Central"/>
</dbReference>
<dbReference type="GO" id="GO:0006000">
    <property type="term" value="P:fructose metabolic process"/>
    <property type="evidence" value="ECO:0007669"/>
    <property type="project" value="InterPro"/>
</dbReference>
<dbReference type="GO" id="GO:0006096">
    <property type="term" value="P:glycolytic process"/>
    <property type="evidence" value="ECO:0007669"/>
    <property type="project" value="UniProtKB-UniRule"/>
</dbReference>
<dbReference type="CDD" id="cd01938">
    <property type="entry name" value="ADPGK_ADPPFK"/>
    <property type="match status" value="1"/>
</dbReference>
<dbReference type="Gene3D" id="3.30.1110.20">
    <property type="match status" value="1"/>
</dbReference>
<dbReference type="Gene3D" id="3.40.1190.20">
    <property type="match status" value="1"/>
</dbReference>
<dbReference type="HAMAP" id="MF_00561">
    <property type="entry name" value="ADP_PFKinase"/>
    <property type="match status" value="1"/>
</dbReference>
<dbReference type="InterPro" id="IPR007666">
    <property type="entry name" value="ADP_PFK/GK"/>
</dbReference>
<dbReference type="InterPro" id="IPR015990">
    <property type="entry name" value="ADP_PFK/GK_arc"/>
</dbReference>
<dbReference type="InterPro" id="IPR011790">
    <property type="entry name" value="ADP_PFK_arc"/>
</dbReference>
<dbReference type="InterPro" id="IPR029056">
    <property type="entry name" value="Ribokinase-like"/>
</dbReference>
<dbReference type="NCBIfam" id="TIGR02045">
    <property type="entry name" value="P_fruct_ADP"/>
    <property type="match status" value="1"/>
</dbReference>
<dbReference type="PANTHER" id="PTHR21208">
    <property type="entry name" value="ADP-DEPENDENT GLUCOKINASE"/>
    <property type="match status" value="1"/>
</dbReference>
<dbReference type="PANTHER" id="PTHR21208:SF1">
    <property type="entry name" value="ADP-DEPENDENT GLUCOKINASE"/>
    <property type="match status" value="1"/>
</dbReference>
<dbReference type="Pfam" id="PF04587">
    <property type="entry name" value="ADP_PFK_GK"/>
    <property type="match status" value="1"/>
</dbReference>
<dbReference type="PIRSF" id="PIRSF015883">
    <property type="entry name" value="ADP-Pfk_glckin"/>
    <property type="match status" value="1"/>
</dbReference>
<dbReference type="SUPFAM" id="SSF53613">
    <property type="entry name" value="Ribokinase-like"/>
    <property type="match status" value="1"/>
</dbReference>
<dbReference type="PROSITE" id="PS51255">
    <property type="entry name" value="ADPK"/>
    <property type="match status" value="1"/>
</dbReference>
<gene>
    <name evidence="1" type="primary">pfkC</name>
    <name type="synonym">pfk</name>
    <name type="ordered locus">MA_3563</name>
</gene>
<organism>
    <name type="scientific">Methanosarcina acetivorans (strain ATCC 35395 / DSM 2834 / JCM 12185 / C2A)</name>
    <dbReference type="NCBI Taxonomy" id="188937"/>
    <lineage>
        <taxon>Archaea</taxon>
        <taxon>Methanobacteriati</taxon>
        <taxon>Methanobacteriota</taxon>
        <taxon>Stenosarchaea group</taxon>
        <taxon>Methanomicrobia</taxon>
        <taxon>Methanosarcinales</taxon>
        <taxon>Methanosarcinaceae</taxon>
        <taxon>Methanosarcina</taxon>
    </lineage>
</organism>
<accession>P58847</accession>
<sequence length="491" mass="54937">MDIEEWEQRHAEAFYNAKEALPYLDGMFVAYNSNIDAIRHLTEEDLSKLVGFFDESDIQDRVAAYPREIAEPLDFVARLLISMREGKAAEVPAYTADIHEWLKEHLGFDYARMGGQAGIISNLLGRLGLKKVVAYVPWLSEEQAEYFTATGNILHPKVENGKVLLKPPGEAFKPGIGSKVNWILEYSKDMNVTCAGNTFKVPRDNRLIISSRPKWLRLDMDKQIYEQLDTLLPVDGAMLSGYQMIKEEYEDGSTYKDYVENSVKVIEKLKSLNPELRIHVELTSIQNRLIRKAILTEIVARHVHSLGLDTVEVANALNVLGHEELSYSVIRKGENGIMSLYQGAVQLMKDLDLERVHVHSLGFYICILAKGHPLTLKEHRDSLLFSSVLAAAQALNGNIENLAEAEAGLEVPVSSIGLEDLENFQLYCTGRKLCTPDEFEYGYVYGSEHDAILIPSKVVERPKATVGIGDTISAGAFVAMLAKIKQKHSGK</sequence>
<protein>
    <recommendedName>
        <fullName evidence="1">ADP-specific phosphofructokinase</fullName>
        <ecNumber evidence="1">2.7.1.146</ecNumber>
    </recommendedName>
    <alternativeName>
        <fullName evidence="1">ADP-dependent phosphofructokinase</fullName>
        <shortName evidence="1">ADP-Pfk</shortName>
    </alternativeName>
</protein>